<organism>
    <name type="scientific">Bacillus cereus (strain AH187)</name>
    <dbReference type="NCBI Taxonomy" id="405534"/>
    <lineage>
        <taxon>Bacteria</taxon>
        <taxon>Bacillati</taxon>
        <taxon>Bacillota</taxon>
        <taxon>Bacilli</taxon>
        <taxon>Bacillales</taxon>
        <taxon>Bacillaceae</taxon>
        <taxon>Bacillus</taxon>
        <taxon>Bacillus cereus group</taxon>
    </lineage>
</organism>
<proteinExistence type="inferred from homology"/>
<keyword id="KW-0378">Hydrolase</keyword>
<keyword id="KW-0645">Protease</keyword>
<keyword id="KW-0865">Zymogen</keyword>
<reference key="1">
    <citation type="submission" date="2008-10" db="EMBL/GenBank/DDBJ databases">
        <title>Genome sequence of Bacillus cereus AH187.</title>
        <authorList>
            <person name="Dodson R.J."/>
            <person name="Durkin A.S."/>
            <person name="Rosovitz M.J."/>
            <person name="Rasko D.A."/>
            <person name="Kolsto A.B."/>
            <person name="Okstad O.A."/>
            <person name="Ravel J."/>
            <person name="Sutton G."/>
        </authorList>
    </citation>
    <scope>NUCLEOTIDE SEQUENCE [LARGE SCALE GENOMIC DNA]</scope>
    <source>
        <strain>AH187</strain>
    </source>
</reference>
<comment type="function">
    <text evidence="1">Initiates the rapid degradation of small, acid-soluble proteins during spore germination.</text>
</comment>
<comment type="catalytic activity">
    <reaction evidence="1">
        <text>Endopeptidase action with P4 Glu or Asp, P1 preferably Glu &gt; Asp, P1' hydrophobic and P2' Ala.</text>
        <dbReference type="EC" id="3.4.24.78"/>
    </reaction>
</comment>
<comment type="subunit">
    <text evidence="1">Homotetramer.</text>
</comment>
<comment type="PTM">
    <text evidence="1">Autoproteolytically processed. The inactive tetrameric zymogen termed p46 autoprocesses to a smaller form termed p41, which is active only during spore germination.</text>
</comment>
<comment type="similarity">
    <text evidence="1">Belongs to the peptidase A25 family.</text>
</comment>
<evidence type="ECO:0000255" key="1">
    <source>
        <dbReference type="HAMAP-Rule" id="MF_00626"/>
    </source>
</evidence>
<feature type="propeptide" id="PRO_1000130530" evidence="1">
    <location>
        <begin position="1"/>
        <end position="15"/>
    </location>
</feature>
<feature type="chain" id="PRO_1000130531" description="Germination protease">
    <location>
        <begin position="16"/>
        <end position="367"/>
    </location>
</feature>
<protein>
    <recommendedName>
        <fullName evidence="1">Germination protease</fullName>
        <ecNumber evidence="1">3.4.24.78</ecNumber>
    </recommendedName>
    <alternativeName>
        <fullName evidence="1">GPR endopeptidase</fullName>
    </alternativeName>
    <alternativeName>
        <fullName evidence="1">Germination proteinase</fullName>
    </alternativeName>
    <alternativeName>
        <fullName evidence="1">Spore protease</fullName>
    </alternativeName>
</protein>
<gene>
    <name evidence="1" type="primary">gpr</name>
    <name type="ordered locus">BCAH187_A4454</name>
</gene>
<dbReference type="EC" id="3.4.24.78" evidence="1"/>
<dbReference type="EMBL" id="CP001177">
    <property type="protein sequence ID" value="ACJ77615.1"/>
    <property type="molecule type" value="Genomic_DNA"/>
</dbReference>
<dbReference type="SMR" id="B7HPM0"/>
<dbReference type="MEROPS" id="A25.001"/>
<dbReference type="KEGG" id="bcr:BCAH187_A4454"/>
<dbReference type="HOGENOM" id="CLU_055087_1_0_9"/>
<dbReference type="Proteomes" id="UP000002214">
    <property type="component" value="Chromosome"/>
</dbReference>
<dbReference type="GO" id="GO:0004222">
    <property type="term" value="F:metalloendopeptidase activity"/>
    <property type="evidence" value="ECO:0007669"/>
    <property type="project" value="UniProtKB-UniRule"/>
</dbReference>
<dbReference type="GO" id="GO:0006508">
    <property type="term" value="P:proteolysis"/>
    <property type="evidence" value="ECO:0007669"/>
    <property type="project" value="UniProtKB-UniRule"/>
</dbReference>
<dbReference type="GO" id="GO:0009847">
    <property type="term" value="P:spore germination"/>
    <property type="evidence" value="ECO:0007669"/>
    <property type="project" value="UniProtKB-UniRule"/>
</dbReference>
<dbReference type="FunFam" id="3.40.50.1450:FF:000004">
    <property type="entry name" value="Germination protease"/>
    <property type="match status" value="1"/>
</dbReference>
<dbReference type="Gene3D" id="3.40.50.1450">
    <property type="entry name" value="HybD-like"/>
    <property type="match status" value="1"/>
</dbReference>
<dbReference type="HAMAP" id="MF_00626">
    <property type="entry name" value="Germination_prot"/>
    <property type="match status" value="1"/>
</dbReference>
<dbReference type="InterPro" id="IPR023430">
    <property type="entry name" value="Pept_HybD-like_dom_sf"/>
</dbReference>
<dbReference type="InterPro" id="IPR005080">
    <property type="entry name" value="Peptidase_A25"/>
</dbReference>
<dbReference type="NCBIfam" id="TIGR01441">
    <property type="entry name" value="GPR"/>
    <property type="match status" value="1"/>
</dbReference>
<dbReference type="Pfam" id="PF03418">
    <property type="entry name" value="Peptidase_A25"/>
    <property type="match status" value="1"/>
</dbReference>
<dbReference type="PIRSF" id="PIRSF019549">
    <property type="entry name" value="Peptidase_A25"/>
    <property type="match status" value="1"/>
</dbReference>
<dbReference type="SUPFAM" id="SSF53163">
    <property type="entry name" value="HybD-like"/>
    <property type="match status" value="1"/>
</dbReference>
<accession>B7HPM0</accession>
<name>GPR_BACC7</name>
<sequence>MKEPLDLSKYSVRTDLAVEAHQMLQERQEEQQGIQGVVVKEREEEGITITKVTIDEVASESMGKKPGNYLTLEVQGIRQQDTELQQKVERIFAKEFSYFLEEVGVTKEASCLIVGLGNWNVTPDALGPIVVENVLVTRHLFQLQPESVEEGFRPVSAIRPGVMGITGIETSDVIYGIIEKTKPDFVIAIDALAARSIERVNSTIQISDTGIHPGSGVGNKRKELSKETLGIPVIAIGVPTVVDAVSITSDTIDFILKHFGREMKEGNKPSRSLLPAGFTFGEKKKLTEEDMPDEKSRNMFLGAVGTLEDEEKRKLIYEVLSPLGHNLMVTPKEVDAFIEDMANVIASGLNAALHHQIDQDNTGAYTH</sequence>